<sequence>MKQILYKLFEHQYLGRDEARTILQNIAQGKYNDAQVASLITVFLMRNISVEELCGFRDALLEMRVPVDLSEFAPIDIVGTGGDGKNTFNISTAACFTVAGAGFPVVKHGNYGATSVSGASNVMEQHGVKFTDHTDRLRRSMEKCNIAYLHAPLFNPALKAVAPIRKALAVRTFFNMLGPLVNPVIPTYQLLGVYNLPLLRLYTYTYQESATRFAVVHSLDGYDEISLTDEFKVATCGNEKIYTPESLGFNRCRESELDGGNTPEDATRIFDAVMEGTATEAQKNVVIVNAAFAIRVICPEKPIEECIALARESLESGKARETLKKFVELNG</sequence>
<accession>Q5LBZ5</accession>
<name>TRPD_BACFN</name>
<dbReference type="EC" id="2.4.2.18" evidence="1"/>
<dbReference type="EMBL" id="CR626927">
    <property type="protein sequence ID" value="CAH08373.1"/>
    <property type="molecule type" value="Genomic_DNA"/>
</dbReference>
<dbReference type="RefSeq" id="WP_005793365.1">
    <property type="nucleotide sequence ID" value="NZ_UFTH01000002.1"/>
</dbReference>
<dbReference type="SMR" id="Q5LBZ5"/>
<dbReference type="PaxDb" id="272559-BF9343_2592"/>
<dbReference type="GeneID" id="60367501"/>
<dbReference type="KEGG" id="bfs:BF9343_2592"/>
<dbReference type="eggNOG" id="COG0547">
    <property type="taxonomic scope" value="Bacteria"/>
</dbReference>
<dbReference type="HOGENOM" id="CLU_034315_3_1_10"/>
<dbReference type="UniPathway" id="UPA00035">
    <property type="reaction ID" value="UER00041"/>
</dbReference>
<dbReference type="Proteomes" id="UP000006731">
    <property type="component" value="Chromosome"/>
</dbReference>
<dbReference type="GO" id="GO:0005829">
    <property type="term" value="C:cytosol"/>
    <property type="evidence" value="ECO:0007669"/>
    <property type="project" value="TreeGrafter"/>
</dbReference>
<dbReference type="GO" id="GO:0004048">
    <property type="term" value="F:anthranilate phosphoribosyltransferase activity"/>
    <property type="evidence" value="ECO:0007669"/>
    <property type="project" value="UniProtKB-UniRule"/>
</dbReference>
<dbReference type="GO" id="GO:0000287">
    <property type="term" value="F:magnesium ion binding"/>
    <property type="evidence" value="ECO:0007669"/>
    <property type="project" value="UniProtKB-UniRule"/>
</dbReference>
<dbReference type="GO" id="GO:0000162">
    <property type="term" value="P:L-tryptophan biosynthetic process"/>
    <property type="evidence" value="ECO:0007669"/>
    <property type="project" value="UniProtKB-UniRule"/>
</dbReference>
<dbReference type="FunFam" id="1.20.970.10:FF:000008">
    <property type="entry name" value="Anthranilate phosphoribosyltransferase"/>
    <property type="match status" value="1"/>
</dbReference>
<dbReference type="Gene3D" id="3.40.1030.10">
    <property type="entry name" value="Nucleoside phosphorylase/phosphoribosyltransferase catalytic domain"/>
    <property type="match status" value="1"/>
</dbReference>
<dbReference type="Gene3D" id="1.20.970.10">
    <property type="entry name" value="Transferase, Pyrimidine Nucleoside Phosphorylase, Chain C"/>
    <property type="match status" value="1"/>
</dbReference>
<dbReference type="HAMAP" id="MF_00211">
    <property type="entry name" value="TrpD"/>
    <property type="match status" value="1"/>
</dbReference>
<dbReference type="InterPro" id="IPR005940">
    <property type="entry name" value="Anthranilate_Pribosyl_Tfrase"/>
</dbReference>
<dbReference type="InterPro" id="IPR000312">
    <property type="entry name" value="Glycosyl_Trfase_fam3"/>
</dbReference>
<dbReference type="InterPro" id="IPR017459">
    <property type="entry name" value="Glycosyl_Trfase_fam3_N_dom"/>
</dbReference>
<dbReference type="InterPro" id="IPR036320">
    <property type="entry name" value="Glycosyl_Trfase_fam3_N_dom_sf"/>
</dbReference>
<dbReference type="InterPro" id="IPR035902">
    <property type="entry name" value="Nuc_phospho_transferase"/>
</dbReference>
<dbReference type="NCBIfam" id="TIGR01245">
    <property type="entry name" value="trpD"/>
    <property type="match status" value="1"/>
</dbReference>
<dbReference type="PANTHER" id="PTHR43285">
    <property type="entry name" value="ANTHRANILATE PHOSPHORIBOSYLTRANSFERASE"/>
    <property type="match status" value="1"/>
</dbReference>
<dbReference type="PANTHER" id="PTHR43285:SF2">
    <property type="entry name" value="ANTHRANILATE PHOSPHORIBOSYLTRANSFERASE"/>
    <property type="match status" value="1"/>
</dbReference>
<dbReference type="Pfam" id="PF02885">
    <property type="entry name" value="Glycos_trans_3N"/>
    <property type="match status" value="1"/>
</dbReference>
<dbReference type="Pfam" id="PF00591">
    <property type="entry name" value="Glycos_transf_3"/>
    <property type="match status" value="1"/>
</dbReference>
<dbReference type="SUPFAM" id="SSF52418">
    <property type="entry name" value="Nucleoside phosphorylase/phosphoribosyltransferase catalytic domain"/>
    <property type="match status" value="1"/>
</dbReference>
<dbReference type="SUPFAM" id="SSF47648">
    <property type="entry name" value="Nucleoside phosphorylase/phosphoribosyltransferase N-terminal domain"/>
    <property type="match status" value="1"/>
</dbReference>
<protein>
    <recommendedName>
        <fullName evidence="1">Anthranilate phosphoribosyltransferase</fullName>
        <ecNumber evidence="1">2.4.2.18</ecNumber>
    </recommendedName>
</protein>
<comment type="function">
    <text evidence="1">Catalyzes the transfer of the phosphoribosyl group of 5-phosphorylribose-1-pyrophosphate (PRPP) to anthranilate to yield N-(5'-phosphoribosyl)-anthranilate (PRA).</text>
</comment>
<comment type="catalytic activity">
    <reaction evidence="1">
        <text>N-(5-phospho-beta-D-ribosyl)anthranilate + diphosphate = 5-phospho-alpha-D-ribose 1-diphosphate + anthranilate</text>
        <dbReference type="Rhea" id="RHEA:11768"/>
        <dbReference type="ChEBI" id="CHEBI:16567"/>
        <dbReference type="ChEBI" id="CHEBI:18277"/>
        <dbReference type="ChEBI" id="CHEBI:33019"/>
        <dbReference type="ChEBI" id="CHEBI:58017"/>
        <dbReference type="EC" id="2.4.2.18"/>
    </reaction>
</comment>
<comment type="cofactor">
    <cofactor evidence="1">
        <name>Mg(2+)</name>
        <dbReference type="ChEBI" id="CHEBI:18420"/>
    </cofactor>
    <text evidence="1">Binds 2 magnesium ions per monomer.</text>
</comment>
<comment type="pathway">
    <text evidence="1">Amino-acid biosynthesis; L-tryptophan biosynthesis; L-tryptophan from chorismate: step 2/5.</text>
</comment>
<comment type="subunit">
    <text evidence="1">Homodimer.</text>
</comment>
<comment type="similarity">
    <text evidence="1">Belongs to the anthranilate phosphoribosyltransferase family.</text>
</comment>
<feature type="chain" id="PRO_1000099778" description="Anthranilate phosphoribosyltransferase">
    <location>
        <begin position="1"/>
        <end position="331"/>
    </location>
</feature>
<feature type="binding site" evidence="1">
    <location>
        <position position="79"/>
    </location>
    <ligand>
        <name>5-phospho-alpha-D-ribose 1-diphosphate</name>
        <dbReference type="ChEBI" id="CHEBI:58017"/>
    </ligand>
</feature>
<feature type="binding site" evidence="1">
    <location>
        <position position="79"/>
    </location>
    <ligand>
        <name>anthranilate</name>
        <dbReference type="ChEBI" id="CHEBI:16567"/>
        <label>1</label>
    </ligand>
</feature>
<feature type="binding site" evidence="1">
    <location>
        <begin position="82"/>
        <end position="83"/>
    </location>
    <ligand>
        <name>5-phospho-alpha-D-ribose 1-diphosphate</name>
        <dbReference type="ChEBI" id="CHEBI:58017"/>
    </ligand>
</feature>
<feature type="binding site" evidence="1">
    <location>
        <position position="87"/>
    </location>
    <ligand>
        <name>5-phospho-alpha-D-ribose 1-diphosphate</name>
        <dbReference type="ChEBI" id="CHEBI:58017"/>
    </ligand>
</feature>
<feature type="binding site" evidence="1">
    <location>
        <begin position="89"/>
        <end position="92"/>
    </location>
    <ligand>
        <name>5-phospho-alpha-D-ribose 1-diphosphate</name>
        <dbReference type="ChEBI" id="CHEBI:58017"/>
    </ligand>
</feature>
<feature type="binding site" evidence="1">
    <location>
        <position position="91"/>
    </location>
    <ligand>
        <name>Mg(2+)</name>
        <dbReference type="ChEBI" id="CHEBI:18420"/>
        <label>1</label>
    </ligand>
</feature>
<feature type="binding site" evidence="1">
    <location>
        <begin position="107"/>
        <end position="115"/>
    </location>
    <ligand>
        <name>5-phospho-alpha-D-ribose 1-diphosphate</name>
        <dbReference type="ChEBI" id="CHEBI:58017"/>
    </ligand>
</feature>
<feature type="binding site" evidence="1">
    <location>
        <position position="110"/>
    </location>
    <ligand>
        <name>anthranilate</name>
        <dbReference type="ChEBI" id="CHEBI:16567"/>
        <label>1</label>
    </ligand>
</feature>
<feature type="binding site" evidence="1">
    <location>
        <position position="119"/>
    </location>
    <ligand>
        <name>5-phospho-alpha-D-ribose 1-diphosphate</name>
        <dbReference type="ChEBI" id="CHEBI:58017"/>
    </ligand>
</feature>
<feature type="binding site" evidence="1">
    <location>
        <position position="165"/>
    </location>
    <ligand>
        <name>anthranilate</name>
        <dbReference type="ChEBI" id="CHEBI:16567"/>
        <label>2</label>
    </ligand>
</feature>
<feature type="binding site" evidence="1">
    <location>
        <position position="223"/>
    </location>
    <ligand>
        <name>Mg(2+)</name>
        <dbReference type="ChEBI" id="CHEBI:18420"/>
        <label>2</label>
    </ligand>
</feature>
<feature type="binding site" evidence="1">
    <location>
        <position position="224"/>
    </location>
    <ligand>
        <name>Mg(2+)</name>
        <dbReference type="ChEBI" id="CHEBI:18420"/>
        <label>1</label>
    </ligand>
</feature>
<feature type="binding site" evidence="1">
    <location>
        <position position="224"/>
    </location>
    <ligand>
        <name>Mg(2+)</name>
        <dbReference type="ChEBI" id="CHEBI:18420"/>
        <label>2</label>
    </ligand>
</feature>
<keyword id="KW-0028">Amino-acid biosynthesis</keyword>
<keyword id="KW-0057">Aromatic amino acid biosynthesis</keyword>
<keyword id="KW-0328">Glycosyltransferase</keyword>
<keyword id="KW-0460">Magnesium</keyword>
<keyword id="KW-0479">Metal-binding</keyword>
<keyword id="KW-0808">Transferase</keyword>
<keyword id="KW-0822">Tryptophan biosynthesis</keyword>
<organism>
    <name type="scientific">Bacteroides fragilis (strain ATCC 25285 / DSM 2151 / CCUG 4856 / JCM 11019 / LMG 10263 / NCTC 9343 / Onslow / VPI 2553 / EN-2)</name>
    <dbReference type="NCBI Taxonomy" id="272559"/>
    <lineage>
        <taxon>Bacteria</taxon>
        <taxon>Pseudomonadati</taxon>
        <taxon>Bacteroidota</taxon>
        <taxon>Bacteroidia</taxon>
        <taxon>Bacteroidales</taxon>
        <taxon>Bacteroidaceae</taxon>
        <taxon>Bacteroides</taxon>
    </lineage>
</organism>
<gene>
    <name evidence="1" type="primary">trpD</name>
    <name type="ordered locus">BF2675</name>
</gene>
<proteinExistence type="inferred from homology"/>
<reference key="1">
    <citation type="journal article" date="2005" name="Science">
        <title>Extensive DNA inversions in the B. fragilis genome control variable gene expression.</title>
        <authorList>
            <person name="Cerdeno-Tarraga A.-M."/>
            <person name="Patrick S."/>
            <person name="Crossman L.C."/>
            <person name="Blakely G."/>
            <person name="Abratt V."/>
            <person name="Lennard N."/>
            <person name="Poxton I."/>
            <person name="Duerden B."/>
            <person name="Harris B."/>
            <person name="Quail M.A."/>
            <person name="Barron A."/>
            <person name="Clark L."/>
            <person name="Corton C."/>
            <person name="Doggett J."/>
            <person name="Holden M.T.G."/>
            <person name="Larke N."/>
            <person name="Line A."/>
            <person name="Lord A."/>
            <person name="Norbertczak H."/>
            <person name="Ormond D."/>
            <person name="Price C."/>
            <person name="Rabbinowitsch E."/>
            <person name="Woodward J."/>
            <person name="Barrell B.G."/>
            <person name="Parkhill J."/>
        </authorList>
    </citation>
    <scope>NUCLEOTIDE SEQUENCE [LARGE SCALE GENOMIC DNA]</scope>
    <source>
        <strain>ATCC 25285 / DSM 2151 / CCUG 4856 / JCM 11019 / LMG 10263 / NCTC 9343 / Onslow / VPI 2553 / EN-2</strain>
    </source>
</reference>
<evidence type="ECO:0000255" key="1">
    <source>
        <dbReference type="HAMAP-Rule" id="MF_00211"/>
    </source>
</evidence>